<feature type="chain" id="PRO_1000066667" description="Acyl carrier protein">
    <location>
        <begin position="1"/>
        <end position="79"/>
    </location>
</feature>
<feature type="domain" description="Carrier" evidence="2">
    <location>
        <begin position="2"/>
        <end position="77"/>
    </location>
</feature>
<feature type="modified residue" description="O-(pantetheine 4'-phosphoryl)serine" evidence="2">
    <location>
        <position position="37"/>
    </location>
</feature>
<evidence type="ECO:0000255" key="1">
    <source>
        <dbReference type="HAMAP-Rule" id="MF_01217"/>
    </source>
</evidence>
<evidence type="ECO:0000255" key="2">
    <source>
        <dbReference type="PROSITE-ProRule" id="PRU00258"/>
    </source>
</evidence>
<keyword id="KW-0963">Cytoplasm</keyword>
<keyword id="KW-0275">Fatty acid biosynthesis</keyword>
<keyword id="KW-0276">Fatty acid metabolism</keyword>
<keyword id="KW-0444">Lipid biosynthesis</keyword>
<keyword id="KW-0443">Lipid metabolism</keyword>
<keyword id="KW-0596">Phosphopantetheine</keyword>
<keyword id="KW-0597">Phosphoprotein</keyword>
<reference key="1">
    <citation type="journal article" date="2010" name="PLoS ONE">
        <title>The complete multipartite genome sequence of Cupriavidus necator JMP134, a versatile pollutant degrader.</title>
        <authorList>
            <person name="Lykidis A."/>
            <person name="Perez-Pantoja D."/>
            <person name="Ledger T."/>
            <person name="Mavromatis K."/>
            <person name="Anderson I.J."/>
            <person name="Ivanova N.N."/>
            <person name="Hooper S.D."/>
            <person name="Lapidus A."/>
            <person name="Lucas S."/>
            <person name="Gonzalez B."/>
            <person name="Kyrpides N.C."/>
        </authorList>
    </citation>
    <scope>NUCLEOTIDE SEQUENCE [LARGE SCALE GENOMIC DNA]</scope>
    <source>
        <strain>JMP134 / LMG 1197</strain>
    </source>
</reference>
<proteinExistence type="inferred from homology"/>
<gene>
    <name evidence="1" type="primary">acpP</name>
    <name type="ordered locus">Reut_A2262</name>
</gene>
<name>ACP_CUPPJ</name>
<accession>Q46Z08</accession>
<dbReference type="EMBL" id="CP000090">
    <property type="protein sequence ID" value="AAZ61625.1"/>
    <property type="molecule type" value="Genomic_DNA"/>
</dbReference>
<dbReference type="SMR" id="Q46Z08"/>
<dbReference type="STRING" id="264198.Reut_A2262"/>
<dbReference type="KEGG" id="reu:Reut_A2262"/>
<dbReference type="eggNOG" id="COG0236">
    <property type="taxonomic scope" value="Bacteria"/>
</dbReference>
<dbReference type="HOGENOM" id="CLU_108696_5_1_4"/>
<dbReference type="OrthoDB" id="9804551at2"/>
<dbReference type="UniPathway" id="UPA00094"/>
<dbReference type="GO" id="GO:0005829">
    <property type="term" value="C:cytosol"/>
    <property type="evidence" value="ECO:0007669"/>
    <property type="project" value="TreeGrafter"/>
</dbReference>
<dbReference type="GO" id="GO:0016020">
    <property type="term" value="C:membrane"/>
    <property type="evidence" value="ECO:0007669"/>
    <property type="project" value="GOC"/>
</dbReference>
<dbReference type="GO" id="GO:0000035">
    <property type="term" value="F:acyl binding"/>
    <property type="evidence" value="ECO:0007669"/>
    <property type="project" value="TreeGrafter"/>
</dbReference>
<dbReference type="GO" id="GO:0000036">
    <property type="term" value="F:acyl carrier activity"/>
    <property type="evidence" value="ECO:0007669"/>
    <property type="project" value="UniProtKB-UniRule"/>
</dbReference>
<dbReference type="GO" id="GO:0009245">
    <property type="term" value="P:lipid A biosynthetic process"/>
    <property type="evidence" value="ECO:0007669"/>
    <property type="project" value="TreeGrafter"/>
</dbReference>
<dbReference type="FunFam" id="1.10.1200.10:FF:000001">
    <property type="entry name" value="Acyl carrier protein"/>
    <property type="match status" value="1"/>
</dbReference>
<dbReference type="Gene3D" id="1.10.1200.10">
    <property type="entry name" value="ACP-like"/>
    <property type="match status" value="1"/>
</dbReference>
<dbReference type="HAMAP" id="MF_01217">
    <property type="entry name" value="Acyl_carrier"/>
    <property type="match status" value="1"/>
</dbReference>
<dbReference type="InterPro" id="IPR003231">
    <property type="entry name" value="ACP"/>
</dbReference>
<dbReference type="InterPro" id="IPR036736">
    <property type="entry name" value="ACP-like_sf"/>
</dbReference>
<dbReference type="InterPro" id="IPR009081">
    <property type="entry name" value="PP-bd_ACP"/>
</dbReference>
<dbReference type="InterPro" id="IPR006162">
    <property type="entry name" value="Ppantetheine_attach_site"/>
</dbReference>
<dbReference type="NCBIfam" id="TIGR00517">
    <property type="entry name" value="acyl_carrier"/>
    <property type="match status" value="1"/>
</dbReference>
<dbReference type="NCBIfam" id="NF002148">
    <property type="entry name" value="PRK00982.1-2"/>
    <property type="match status" value="1"/>
</dbReference>
<dbReference type="NCBIfam" id="NF002149">
    <property type="entry name" value="PRK00982.1-3"/>
    <property type="match status" value="1"/>
</dbReference>
<dbReference type="NCBIfam" id="NF002150">
    <property type="entry name" value="PRK00982.1-4"/>
    <property type="match status" value="1"/>
</dbReference>
<dbReference type="NCBIfam" id="NF002151">
    <property type="entry name" value="PRK00982.1-5"/>
    <property type="match status" value="1"/>
</dbReference>
<dbReference type="PANTHER" id="PTHR20863">
    <property type="entry name" value="ACYL CARRIER PROTEIN"/>
    <property type="match status" value="1"/>
</dbReference>
<dbReference type="PANTHER" id="PTHR20863:SF76">
    <property type="entry name" value="CARRIER DOMAIN-CONTAINING PROTEIN"/>
    <property type="match status" value="1"/>
</dbReference>
<dbReference type="Pfam" id="PF00550">
    <property type="entry name" value="PP-binding"/>
    <property type="match status" value="1"/>
</dbReference>
<dbReference type="SUPFAM" id="SSF47336">
    <property type="entry name" value="ACP-like"/>
    <property type="match status" value="1"/>
</dbReference>
<dbReference type="PROSITE" id="PS50075">
    <property type="entry name" value="CARRIER"/>
    <property type="match status" value="1"/>
</dbReference>
<dbReference type="PROSITE" id="PS00012">
    <property type="entry name" value="PHOSPHOPANTETHEINE"/>
    <property type="match status" value="1"/>
</dbReference>
<comment type="function">
    <text evidence="1">Carrier of the growing fatty acid chain in fatty acid biosynthesis.</text>
</comment>
<comment type="pathway">
    <text evidence="1">Lipid metabolism; fatty acid biosynthesis.</text>
</comment>
<comment type="subcellular location">
    <subcellularLocation>
        <location evidence="1">Cytoplasm</location>
    </subcellularLocation>
</comment>
<comment type="PTM">
    <text evidence="1">4'-phosphopantetheine is transferred from CoA to a specific serine of apo-ACP by AcpS. This modification is essential for activity because fatty acids are bound in thioester linkage to the sulfhydryl of the prosthetic group.</text>
</comment>
<comment type="similarity">
    <text evidence="1">Belongs to the acyl carrier protein (ACP) family.</text>
</comment>
<sequence length="79" mass="8682">MDNIEQRVKKIVAEQLGVAEADIKNESSFVNDLGADSLDTVELVMALEDEFGMEIPDEEAEKITTVQQAIDYATAHVKA</sequence>
<protein>
    <recommendedName>
        <fullName evidence="1">Acyl carrier protein</fullName>
        <shortName evidence="1">ACP</shortName>
    </recommendedName>
</protein>
<organism>
    <name type="scientific">Cupriavidus pinatubonensis (strain JMP 134 / LMG 1197)</name>
    <name type="common">Cupriavidus necator (strain JMP 134)</name>
    <dbReference type="NCBI Taxonomy" id="264198"/>
    <lineage>
        <taxon>Bacteria</taxon>
        <taxon>Pseudomonadati</taxon>
        <taxon>Pseudomonadota</taxon>
        <taxon>Betaproteobacteria</taxon>
        <taxon>Burkholderiales</taxon>
        <taxon>Burkholderiaceae</taxon>
        <taxon>Cupriavidus</taxon>
    </lineage>
</organism>